<evidence type="ECO:0000255" key="1">
    <source>
        <dbReference type="HAMAP-Rule" id="MF_01553"/>
    </source>
</evidence>
<reference key="1">
    <citation type="journal article" date="2007" name="J. Bacteriol.">
        <title>Complete genome of acute rheumatic fever-associated serotype M5 Streptococcus pyogenes strain Manfredo.</title>
        <authorList>
            <person name="Holden M.T.G."/>
            <person name="Scott A."/>
            <person name="Cherevach I."/>
            <person name="Chillingworth T."/>
            <person name="Churcher C."/>
            <person name="Cronin A."/>
            <person name="Dowd L."/>
            <person name="Feltwell T."/>
            <person name="Hamlin N."/>
            <person name="Holroyd S."/>
            <person name="Jagels K."/>
            <person name="Moule S."/>
            <person name="Mungall K."/>
            <person name="Quail M.A."/>
            <person name="Price C."/>
            <person name="Rabbinowitsch E."/>
            <person name="Sharp S."/>
            <person name="Skelton J."/>
            <person name="Whitehead S."/>
            <person name="Barrell B.G."/>
            <person name="Kehoe M."/>
            <person name="Parkhill J."/>
        </authorList>
    </citation>
    <scope>NUCLEOTIDE SEQUENCE [LARGE SCALE GENOMIC DNA]</scope>
    <source>
        <strain>Manfredo</strain>
    </source>
</reference>
<proteinExistence type="inferred from homology"/>
<dbReference type="EC" id="2.7.7.6" evidence="1"/>
<dbReference type="EMBL" id="AM295007">
    <property type="protein sequence ID" value="CAM29599.1"/>
    <property type="molecule type" value="Genomic_DNA"/>
</dbReference>
<dbReference type="RefSeq" id="WP_002982907.1">
    <property type="nucleotide sequence ID" value="NC_009332.1"/>
</dbReference>
<dbReference type="SMR" id="A2RCM6"/>
<dbReference type="KEGG" id="spf:SpyM50257"/>
<dbReference type="HOGENOM" id="CLU_187518_0_0_9"/>
<dbReference type="GO" id="GO:0000428">
    <property type="term" value="C:DNA-directed RNA polymerase complex"/>
    <property type="evidence" value="ECO:0007669"/>
    <property type="project" value="UniProtKB-KW"/>
</dbReference>
<dbReference type="GO" id="GO:0003677">
    <property type="term" value="F:DNA binding"/>
    <property type="evidence" value="ECO:0007669"/>
    <property type="project" value="UniProtKB-UniRule"/>
</dbReference>
<dbReference type="GO" id="GO:0003899">
    <property type="term" value="F:DNA-directed RNA polymerase activity"/>
    <property type="evidence" value="ECO:0007669"/>
    <property type="project" value="UniProtKB-UniRule"/>
</dbReference>
<dbReference type="GO" id="GO:0006351">
    <property type="term" value="P:DNA-templated transcription"/>
    <property type="evidence" value="ECO:0007669"/>
    <property type="project" value="UniProtKB-UniRule"/>
</dbReference>
<dbReference type="Gene3D" id="3.10.20.730">
    <property type="entry name" value="RNAP, epsilon subunit-like"/>
    <property type="match status" value="1"/>
</dbReference>
<dbReference type="HAMAP" id="MF_01553">
    <property type="entry name" value="RNApol_bact_RpoY"/>
    <property type="match status" value="1"/>
</dbReference>
<dbReference type="InterPro" id="IPR009907">
    <property type="entry name" value="RpoY"/>
</dbReference>
<dbReference type="NCBIfam" id="NF010188">
    <property type="entry name" value="PRK13667.1"/>
    <property type="match status" value="1"/>
</dbReference>
<dbReference type="Pfam" id="PF07288">
    <property type="entry name" value="RpoY"/>
    <property type="match status" value="1"/>
</dbReference>
<comment type="function">
    <text evidence="1">A non-essential component of RNA polymerase (RNAP).</text>
</comment>
<comment type="catalytic activity">
    <reaction evidence="1">
        <text>RNA(n) + a ribonucleoside 5'-triphosphate = RNA(n+1) + diphosphate</text>
        <dbReference type="Rhea" id="RHEA:21248"/>
        <dbReference type="Rhea" id="RHEA-COMP:14527"/>
        <dbReference type="Rhea" id="RHEA-COMP:17342"/>
        <dbReference type="ChEBI" id="CHEBI:33019"/>
        <dbReference type="ChEBI" id="CHEBI:61557"/>
        <dbReference type="ChEBI" id="CHEBI:140395"/>
        <dbReference type="EC" id="2.7.7.6"/>
    </reaction>
</comment>
<comment type="subunit">
    <text evidence="1">RNAP is composed of a core of 2 alpha, a beta and a beta' subunit. The core is associated with a delta subunit, and at least one of epsilon or omega. When a sigma factor is associated with the core the holoenzyme is formed, which can initiate transcription.</text>
</comment>
<comment type="similarity">
    <text evidence="1">Belongs to the RNA polymerase subunit epsilon family.</text>
</comment>
<organism>
    <name type="scientific">Streptococcus pyogenes serotype M5 (strain Manfredo)</name>
    <dbReference type="NCBI Taxonomy" id="160491"/>
    <lineage>
        <taxon>Bacteria</taxon>
        <taxon>Bacillati</taxon>
        <taxon>Bacillota</taxon>
        <taxon>Bacilli</taxon>
        <taxon>Lactobacillales</taxon>
        <taxon>Streptococcaceae</taxon>
        <taxon>Streptococcus</taxon>
    </lineage>
</organism>
<gene>
    <name evidence="1" type="primary">rpoY</name>
    <name type="ordered locus">SpyM50257</name>
</gene>
<sequence length="76" mass="9146">MIYKVFYQETKDQSPRRESTKALYLNIDATDELDGRIKARRLVEDNTYYNVEFIELLSDKHLDYEKETGVFELTEF</sequence>
<accession>A2RCM6</accession>
<keyword id="KW-0240">DNA-directed RNA polymerase</keyword>
<keyword id="KW-0548">Nucleotidyltransferase</keyword>
<keyword id="KW-0804">Transcription</keyword>
<keyword id="KW-0808">Transferase</keyword>
<name>RPOY_STRPG</name>
<feature type="chain" id="PRO_1000068882" description="DNA-directed RNA polymerase subunit epsilon">
    <location>
        <begin position="1"/>
        <end position="76"/>
    </location>
</feature>
<protein>
    <recommendedName>
        <fullName evidence="1">DNA-directed RNA polymerase subunit epsilon</fullName>
        <shortName evidence="1">RNAP epsilon subunit</shortName>
        <ecNumber evidence="1">2.7.7.6</ecNumber>
    </recommendedName>
    <alternativeName>
        <fullName evidence="1">RNA polymerase epsilon subunit</fullName>
    </alternativeName>
    <alternativeName>
        <fullName evidence="1">Transcriptase subunit epsilon</fullName>
    </alternativeName>
</protein>